<keyword id="KW-0012">Acyltransferase</keyword>
<keyword id="KW-0028">Amino-acid biosynthesis</keyword>
<keyword id="KW-0963">Cytoplasm</keyword>
<keyword id="KW-0486">Methionine biosynthesis</keyword>
<keyword id="KW-1185">Reference proteome</keyword>
<keyword id="KW-0808">Transferase</keyword>
<gene>
    <name evidence="1" type="primary">metAS</name>
    <name type="ordered locus">ETA_31200</name>
</gene>
<comment type="function">
    <text evidence="1">Transfers a succinyl group from succinyl-CoA to L-homoserine, forming succinyl-L-homoserine.</text>
</comment>
<comment type="catalytic activity">
    <reaction evidence="1">
        <text>L-homoserine + succinyl-CoA = O-succinyl-L-homoserine + CoA</text>
        <dbReference type="Rhea" id="RHEA:22008"/>
        <dbReference type="ChEBI" id="CHEBI:57287"/>
        <dbReference type="ChEBI" id="CHEBI:57292"/>
        <dbReference type="ChEBI" id="CHEBI:57476"/>
        <dbReference type="ChEBI" id="CHEBI:57661"/>
        <dbReference type="EC" id="2.3.1.46"/>
    </reaction>
</comment>
<comment type="pathway">
    <text evidence="1">Amino-acid biosynthesis; L-methionine biosynthesis via de novo pathway; O-succinyl-L-homoserine from L-homoserine: step 1/1.</text>
</comment>
<comment type="subcellular location">
    <subcellularLocation>
        <location evidence="1">Cytoplasm</location>
    </subcellularLocation>
</comment>
<comment type="similarity">
    <text evidence="1">Belongs to the MetA family.</text>
</comment>
<protein>
    <recommendedName>
        <fullName evidence="1">Homoserine O-succinyltransferase</fullName>
        <shortName evidence="1">HST</shortName>
        <ecNumber evidence="1">2.3.1.46</ecNumber>
    </recommendedName>
    <alternativeName>
        <fullName evidence="1">Homoserine transsuccinylase</fullName>
        <shortName evidence="1">HTS</shortName>
    </alternativeName>
</protein>
<sequence length="309" mass="35794">MPIRVPDELPAVNFLRNENVFVMTSTRASTQMIRPLKVLVLNLMPKKIETENQFLRLLSNSPLQIDIQLLRIDTRESRNTPSEHLNNFYRNFEDIQHDNYDGLIVTGAPLGLVDFCDVAYWPQIHKVLHWAKEHVTSTLFVCWAVQAALNILYGIPKQTRDSKLSGVFDHQILHPHALLTRGFDDTFLAPHSRYADFPAGLIRDYTDLEIFAESEQTGAYLFASKDKRLAFVTGHPEYDALTLSGEYHRDYEAGLNPEIPFNYFPQDNPQLEPRASWRSHGNLLFSNWLNYYVYQITPFDLRHMNPTLD</sequence>
<dbReference type="EC" id="2.3.1.46" evidence="1"/>
<dbReference type="EMBL" id="CU468135">
    <property type="protein sequence ID" value="CAO98166.1"/>
    <property type="molecule type" value="Genomic_DNA"/>
</dbReference>
<dbReference type="RefSeq" id="WP_012442816.1">
    <property type="nucleotide sequence ID" value="NC_010694.1"/>
</dbReference>
<dbReference type="SMR" id="B2VK85"/>
<dbReference type="STRING" id="465817.ETA_31200"/>
<dbReference type="KEGG" id="eta:ETA_31200"/>
<dbReference type="eggNOG" id="COG1897">
    <property type="taxonomic scope" value="Bacteria"/>
</dbReference>
<dbReference type="HOGENOM" id="CLU_057851_0_1_6"/>
<dbReference type="OrthoDB" id="9772423at2"/>
<dbReference type="UniPathway" id="UPA00051">
    <property type="reaction ID" value="UER00075"/>
</dbReference>
<dbReference type="Proteomes" id="UP000001726">
    <property type="component" value="Chromosome"/>
</dbReference>
<dbReference type="GO" id="GO:0005737">
    <property type="term" value="C:cytoplasm"/>
    <property type="evidence" value="ECO:0007669"/>
    <property type="project" value="UniProtKB-SubCell"/>
</dbReference>
<dbReference type="GO" id="GO:0004414">
    <property type="term" value="F:homoserine O-acetyltransferase activity"/>
    <property type="evidence" value="ECO:0007669"/>
    <property type="project" value="UniProtKB-UniRule"/>
</dbReference>
<dbReference type="GO" id="GO:0008899">
    <property type="term" value="F:homoserine O-succinyltransferase activity"/>
    <property type="evidence" value="ECO:0007669"/>
    <property type="project" value="UniProtKB-EC"/>
</dbReference>
<dbReference type="GO" id="GO:0019281">
    <property type="term" value="P:L-methionine biosynthetic process from homoserine via O-succinyl-L-homoserine and cystathionine"/>
    <property type="evidence" value="ECO:0007669"/>
    <property type="project" value="InterPro"/>
</dbReference>
<dbReference type="CDD" id="cd03131">
    <property type="entry name" value="GATase1_HTS"/>
    <property type="match status" value="1"/>
</dbReference>
<dbReference type="FunFam" id="3.40.50.880:FF:000004">
    <property type="entry name" value="Homoserine O-succinyltransferase"/>
    <property type="match status" value="1"/>
</dbReference>
<dbReference type="Gene3D" id="3.40.50.880">
    <property type="match status" value="1"/>
</dbReference>
<dbReference type="HAMAP" id="MF_00295">
    <property type="entry name" value="MetA_acyltransf"/>
    <property type="match status" value="1"/>
</dbReference>
<dbReference type="InterPro" id="IPR029062">
    <property type="entry name" value="Class_I_gatase-like"/>
</dbReference>
<dbReference type="InterPro" id="IPR005697">
    <property type="entry name" value="HST_MetA"/>
</dbReference>
<dbReference type="InterPro" id="IPR033752">
    <property type="entry name" value="MetA_family"/>
</dbReference>
<dbReference type="NCBIfam" id="TIGR01001">
    <property type="entry name" value="metA"/>
    <property type="match status" value="1"/>
</dbReference>
<dbReference type="PANTHER" id="PTHR20919">
    <property type="entry name" value="HOMOSERINE O-SUCCINYLTRANSFERASE"/>
    <property type="match status" value="1"/>
</dbReference>
<dbReference type="PANTHER" id="PTHR20919:SF0">
    <property type="entry name" value="HOMOSERINE O-SUCCINYLTRANSFERASE"/>
    <property type="match status" value="1"/>
</dbReference>
<dbReference type="Pfam" id="PF04204">
    <property type="entry name" value="HTS"/>
    <property type="match status" value="1"/>
</dbReference>
<dbReference type="PIRSF" id="PIRSF000450">
    <property type="entry name" value="H_ser_succinyltr"/>
    <property type="match status" value="1"/>
</dbReference>
<dbReference type="SUPFAM" id="SSF52317">
    <property type="entry name" value="Class I glutamine amidotransferase-like"/>
    <property type="match status" value="1"/>
</dbReference>
<accession>B2VK85</accession>
<organism>
    <name type="scientific">Erwinia tasmaniensis (strain DSM 17950 / CFBP 7177 / CIP 109463 / NCPPB 4357 / Et1/99)</name>
    <dbReference type="NCBI Taxonomy" id="465817"/>
    <lineage>
        <taxon>Bacteria</taxon>
        <taxon>Pseudomonadati</taxon>
        <taxon>Pseudomonadota</taxon>
        <taxon>Gammaproteobacteria</taxon>
        <taxon>Enterobacterales</taxon>
        <taxon>Erwiniaceae</taxon>
        <taxon>Erwinia</taxon>
    </lineage>
</organism>
<feature type="chain" id="PRO_1000115181" description="Homoserine O-succinyltransferase">
    <location>
        <begin position="1"/>
        <end position="309"/>
    </location>
</feature>
<feature type="active site" description="Acyl-thioester intermediate" evidence="1">
    <location>
        <position position="142"/>
    </location>
</feature>
<feature type="active site" description="Proton acceptor" evidence="1">
    <location>
        <position position="235"/>
    </location>
</feature>
<feature type="active site" evidence="1">
    <location>
        <position position="237"/>
    </location>
</feature>
<feature type="binding site" evidence="1">
    <location>
        <position position="163"/>
    </location>
    <ligand>
        <name>substrate</name>
    </ligand>
</feature>
<feature type="binding site" evidence="1">
    <location>
        <position position="192"/>
    </location>
    <ligand>
        <name>substrate</name>
    </ligand>
</feature>
<feature type="binding site" evidence="1">
    <location>
        <position position="249"/>
    </location>
    <ligand>
        <name>substrate</name>
    </ligand>
</feature>
<feature type="site" description="Important for acyl-CoA specificity" evidence="1">
    <location>
        <position position="111"/>
    </location>
</feature>
<feature type="site" description="Important for substrate specificity" evidence="1">
    <location>
        <position position="192"/>
    </location>
</feature>
<reference key="1">
    <citation type="journal article" date="2008" name="Environ. Microbiol.">
        <title>The genome of Erwinia tasmaniensis strain Et1/99, a non-pathogenic bacterium in the genus Erwinia.</title>
        <authorList>
            <person name="Kube M."/>
            <person name="Migdoll A.M."/>
            <person name="Mueller I."/>
            <person name="Kuhl H."/>
            <person name="Beck A."/>
            <person name="Reinhardt R."/>
            <person name="Geider K."/>
        </authorList>
    </citation>
    <scope>NUCLEOTIDE SEQUENCE [LARGE SCALE GENOMIC DNA]</scope>
    <source>
        <strain>DSM 17950 / CFBP 7177 / CIP 109463 / NCPPB 4357 / Et1/99</strain>
    </source>
</reference>
<proteinExistence type="inferred from homology"/>
<evidence type="ECO:0000255" key="1">
    <source>
        <dbReference type="HAMAP-Rule" id="MF_00295"/>
    </source>
</evidence>
<name>METAS_ERWT9</name>